<reference key="1">
    <citation type="submission" date="2009-01" db="EMBL/GenBank/DDBJ databases">
        <title>Complete sequence of Diaphorobacter sp. TPSY.</title>
        <authorList>
            <consortium name="US DOE Joint Genome Institute"/>
            <person name="Lucas S."/>
            <person name="Copeland A."/>
            <person name="Lapidus A."/>
            <person name="Glavina del Rio T."/>
            <person name="Tice H."/>
            <person name="Bruce D."/>
            <person name="Goodwin L."/>
            <person name="Pitluck S."/>
            <person name="Chertkov O."/>
            <person name="Brettin T."/>
            <person name="Detter J.C."/>
            <person name="Han C."/>
            <person name="Larimer F."/>
            <person name="Land M."/>
            <person name="Hauser L."/>
            <person name="Kyrpides N."/>
            <person name="Mikhailova N."/>
            <person name="Coates J.D."/>
        </authorList>
    </citation>
    <scope>NUCLEOTIDE SEQUENCE [LARGE SCALE GENOMIC DNA]</scope>
    <source>
        <strain>TPSY</strain>
    </source>
</reference>
<organism>
    <name type="scientific">Acidovorax ebreus (strain TPSY)</name>
    <name type="common">Diaphorobacter sp. (strain TPSY)</name>
    <dbReference type="NCBI Taxonomy" id="535289"/>
    <lineage>
        <taxon>Bacteria</taxon>
        <taxon>Pseudomonadati</taxon>
        <taxon>Pseudomonadota</taxon>
        <taxon>Betaproteobacteria</taxon>
        <taxon>Burkholderiales</taxon>
        <taxon>Comamonadaceae</taxon>
        <taxon>Diaphorobacter</taxon>
    </lineage>
</organism>
<name>RS5_ACIET</name>
<accession>B9MBV4</accession>
<dbReference type="EMBL" id="CP001392">
    <property type="protein sequence ID" value="ACM31874.1"/>
    <property type="molecule type" value="Genomic_DNA"/>
</dbReference>
<dbReference type="RefSeq" id="WP_011803860.1">
    <property type="nucleotide sequence ID" value="NC_011992.1"/>
</dbReference>
<dbReference type="SMR" id="B9MBV4"/>
<dbReference type="GeneID" id="84683096"/>
<dbReference type="KEGG" id="dia:Dtpsy_0390"/>
<dbReference type="eggNOG" id="COG0098">
    <property type="taxonomic scope" value="Bacteria"/>
</dbReference>
<dbReference type="HOGENOM" id="CLU_065898_2_2_4"/>
<dbReference type="Proteomes" id="UP000000450">
    <property type="component" value="Chromosome"/>
</dbReference>
<dbReference type="GO" id="GO:0015935">
    <property type="term" value="C:small ribosomal subunit"/>
    <property type="evidence" value="ECO:0007669"/>
    <property type="project" value="InterPro"/>
</dbReference>
<dbReference type="GO" id="GO:0019843">
    <property type="term" value="F:rRNA binding"/>
    <property type="evidence" value="ECO:0007669"/>
    <property type="project" value="UniProtKB-UniRule"/>
</dbReference>
<dbReference type="GO" id="GO:0003735">
    <property type="term" value="F:structural constituent of ribosome"/>
    <property type="evidence" value="ECO:0007669"/>
    <property type="project" value="InterPro"/>
</dbReference>
<dbReference type="GO" id="GO:0006412">
    <property type="term" value="P:translation"/>
    <property type="evidence" value="ECO:0007669"/>
    <property type="project" value="UniProtKB-UniRule"/>
</dbReference>
<dbReference type="FunFam" id="3.30.160.20:FF:000001">
    <property type="entry name" value="30S ribosomal protein S5"/>
    <property type="match status" value="1"/>
</dbReference>
<dbReference type="FunFam" id="3.30.230.10:FF:000002">
    <property type="entry name" value="30S ribosomal protein S5"/>
    <property type="match status" value="1"/>
</dbReference>
<dbReference type="Gene3D" id="3.30.160.20">
    <property type="match status" value="1"/>
</dbReference>
<dbReference type="Gene3D" id="3.30.230.10">
    <property type="match status" value="1"/>
</dbReference>
<dbReference type="HAMAP" id="MF_01307_B">
    <property type="entry name" value="Ribosomal_uS5_B"/>
    <property type="match status" value="1"/>
</dbReference>
<dbReference type="InterPro" id="IPR020568">
    <property type="entry name" value="Ribosomal_Su5_D2-typ_SF"/>
</dbReference>
<dbReference type="InterPro" id="IPR000851">
    <property type="entry name" value="Ribosomal_uS5"/>
</dbReference>
<dbReference type="InterPro" id="IPR005712">
    <property type="entry name" value="Ribosomal_uS5_bac-type"/>
</dbReference>
<dbReference type="InterPro" id="IPR005324">
    <property type="entry name" value="Ribosomal_uS5_C"/>
</dbReference>
<dbReference type="InterPro" id="IPR013810">
    <property type="entry name" value="Ribosomal_uS5_N"/>
</dbReference>
<dbReference type="InterPro" id="IPR018192">
    <property type="entry name" value="Ribosomal_uS5_N_CS"/>
</dbReference>
<dbReference type="InterPro" id="IPR014721">
    <property type="entry name" value="Ribsml_uS5_D2-typ_fold_subgr"/>
</dbReference>
<dbReference type="NCBIfam" id="TIGR01021">
    <property type="entry name" value="rpsE_bact"/>
    <property type="match status" value="1"/>
</dbReference>
<dbReference type="PANTHER" id="PTHR48277">
    <property type="entry name" value="MITOCHONDRIAL RIBOSOMAL PROTEIN S5"/>
    <property type="match status" value="1"/>
</dbReference>
<dbReference type="PANTHER" id="PTHR48277:SF1">
    <property type="entry name" value="MITOCHONDRIAL RIBOSOMAL PROTEIN S5"/>
    <property type="match status" value="1"/>
</dbReference>
<dbReference type="Pfam" id="PF00333">
    <property type="entry name" value="Ribosomal_S5"/>
    <property type="match status" value="1"/>
</dbReference>
<dbReference type="Pfam" id="PF03719">
    <property type="entry name" value="Ribosomal_S5_C"/>
    <property type="match status" value="1"/>
</dbReference>
<dbReference type="SUPFAM" id="SSF54768">
    <property type="entry name" value="dsRNA-binding domain-like"/>
    <property type="match status" value="1"/>
</dbReference>
<dbReference type="SUPFAM" id="SSF54211">
    <property type="entry name" value="Ribosomal protein S5 domain 2-like"/>
    <property type="match status" value="1"/>
</dbReference>
<dbReference type="PROSITE" id="PS00585">
    <property type="entry name" value="RIBOSOMAL_S5"/>
    <property type="match status" value="1"/>
</dbReference>
<dbReference type="PROSITE" id="PS50881">
    <property type="entry name" value="S5_DSRBD"/>
    <property type="match status" value="1"/>
</dbReference>
<protein>
    <recommendedName>
        <fullName evidence="1">Small ribosomal subunit protein uS5</fullName>
    </recommendedName>
    <alternativeName>
        <fullName evidence="2">30S ribosomal protein S5</fullName>
    </alternativeName>
</protein>
<feature type="chain" id="PRO_1000165451" description="Small ribosomal subunit protein uS5">
    <location>
        <begin position="1"/>
        <end position="173"/>
    </location>
</feature>
<feature type="domain" description="S5 DRBM" evidence="1">
    <location>
        <begin position="17"/>
        <end position="80"/>
    </location>
</feature>
<proteinExistence type="inferred from homology"/>
<evidence type="ECO:0000255" key="1">
    <source>
        <dbReference type="HAMAP-Rule" id="MF_01307"/>
    </source>
</evidence>
<evidence type="ECO:0000305" key="2"/>
<keyword id="KW-1185">Reference proteome</keyword>
<keyword id="KW-0687">Ribonucleoprotein</keyword>
<keyword id="KW-0689">Ribosomal protein</keyword>
<keyword id="KW-0694">RNA-binding</keyword>
<keyword id="KW-0699">rRNA-binding</keyword>
<comment type="function">
    <text evidence="1">With S4 and S12 plays an important role in translational accuracy.</text>
</comment>
<comment type="function">
    <text evidence="1">Located at the back of the 30S subunit body where it stabilizes the conformation of the head with respect to the body.</text>
</comment>
<comment type="subunit">
    <text evidence="1">Part of the 30S ribosomal subunit. Contacts proteins S4 and S8.</text>
</comment>
<comment type="domain">
    <text>The N-terminal domain interacts with the head of the 30S subunit; the C-terminal domain interacts with the body and contacts protein S4. The interaction surface between S4 and S5 is involved in control of translational fidelity.</text>
</comment>
<comment type="similarity">
    <text evidence="1">Belongs to the universal ribosomal protein uS5 family.</text>
</comment>
<sequence length="173" mass="18109">MAKFQPKVQSEGQDDGLREKMIAVNRVTKVVKGGRILGFAALTVVGDGDGRVGMGKGKSKEVPAAVQKAMEEARRNMVKVSLKNGTIHHNVTGHHGAAVVMMAPAPKGTGIIAGGPMRAVFEVMGITDIVAKSHGSSNPYNMVRATFDALTNSTTPAEVAAKRGKTVEDLFAA</sequence>
<gene>
    <name evidence="1" type="primary">rpsE</name>
    <name type="ordered locus">Dtpsy_0390</name>
</gene>